<organism evidence="9">
    <name type="scientific">Xylocopa appendiculata circumvolans</name>
    <name type="common">Japanese carpenter bee</name>
    <dbReference type="NCBI Taxonomy" id="135722"/>
    <lineage>
        <taxon>Eukaryota</taxon>
        <taxon>Metazoa</taxon>
        <taxon>Ecdysozoa</taxon>
        <taxon>Arthropoda</taxon>
        <taxon>Hexapoda</taxon>
        <taxon>Insecta</taxon>
        <taxon>Pterygota</taxon>
        <taxon>Neoptera</taxon>
        <taxon>Endopterygota</taxon>
        <taxon>Hymenoptera</taxon>
        <taxon>Apocrita</taxon>
        <taxon>Aculeata</taxon>
        <taxon>Apoidea</taxon>
        <taxon>Anthophila</taxon>
        <taxon>Apidae</taxon>
        <taxon>Xylocopa</taxon>
        <taxon>Alloxylocopa</taxon>
    </lineage>
</organism>
<name>PA2_XYLAI</name>
<proteinExistence type="evidence at protein level"/>
<accession>I7GQA7</accession>
<comment type="function">
    <text evidence="7">PLA2 catalyzes the calcium-dependent hydrolysis of the 2-acyl groups in 3-sn-phosphoglycerides.</text>
</comment>
<comment type="catalytic activity">
    <reaction evidence="4">
        <text>a 1,2-diacyl-sn-glycero-3-phosphocholine + H2O = a 1-acyl-sn-glycero-3-phosphocholine + a fatty acid + H(+)</text>
        <dbReference type="Rhea" id="RHEA:15801"/>
        <dbReference type="ChEBI" id="CHEBI:15377"/>
        <dbReference type="ChEBI" id="CHEBI:15378"/>
        <dbReference type="ChEBI" id="CHEBI:28868"/>
        <dbReference type="ChEBI" id="CHEBI:57643"/>
        <dbReference type="ChEBI" id="CHEBI:58168"/>
        <dbReference type="EC" id="3.1.1.4"/>
    </reaction>
</comment>
<comment type="cofactor">
    <cofactor evidence="1">
        <name>Ca(2+)</name>
        <dbReference type="ChEBI" id="CHEBI:29108"/>
    </cofactor>
    <text evidence="1">Binds 1 Ca(2+) ion.</text>
</comment>
<comment type="subcellular location">
    <subcellularLocation>
        <location evidence="2 5">Secreted</location>
    </subcellularLocation>
</comment>
<comment type="tissue specificity">
    <text evidence="5">Expressed by the venom gland.</text>
</comment>
<comment type="mass spectrometry" mass="16508.0" method="MALDI" evidence="5"/>
<comment type="similarity">
    <text evidence="7">Belongs to the phospholipase A2 family. Group III subfamily.</text>
</comment>
<reference evidence="9" key="1">
    <citation type="journal article" date="2017" name="J. Venom. Anim. Toxins Incl. Trop. Dis.">
        <title>Isolation of biologically active peptides from the venom of Japanese carpenter bee, Xylocopa appendiculata.</title>
        <authorList>
            <person name="Kawakami H."/>
            <person name="Goto S.G."/>
            <person name="Murata K."/>
            <person name="Matsuda H."/>
            <person name="Shigeri Y."/>
            <person name="Imura T."/>
            <person name="Inagaki H."/>
            <person name="Shinada T."/>
        </authorList>
    </citation>
    <scope>NUCLEOTIDE SEQUENCE [MRNA]</scope>
    <scope>PROTEIN SEQUENCE OF 40-65</scope>
    <scope>SUBCELLULAR LOCATION</scope>
    <scope>TISSUE SPECIFICITY</scope>
    <scope>MASS SPECTROMETRY</scope>
    <source>
        <tissue evidence="6">Venom</tissue>
        <tissue evidence="6">Venom gland</tissue>
    </source>
</reference>
<protein>
    <recommendedName>
        <fullName evidence="6">Phospholipase A2</fullName>
        <ecNumber evidence="4">3.1.1.4</ecNumber>
    </recommendedName>
    <alternativeName>
        <fullName evidence="1">Phosphatidylcholine 2-acylhydrolase</fullName>
    </alternativeName>
</protein>
<evidence type="ECO:0000250" key="1">
    <source>
        <dbReference type="UniProtKB" id="P00630"/>
    </source>
</evidence>
<evidence type="ECO:0000255" key="2"/>
<evidence type="ECO:0000255" key="3">
    <source>
        <dbReference type="PROSITE-ProRule" id="PRU00498"/>
    </source>
</evidence>
<evidence type="ECO:0000255" key="4">
    <source>
        <dbReference type="PROSITE-ProRule" id="PRU10035"/>
    </source>
</evidence>
<evidence type="ECO:0000269" key="5">
    <source>
    </source>
</evidence>
<evidence type="ECO:0000303" key="6">
    <source>
    </source>
</evidence>
<evidence type="ECO:0000305" key="7"/>
<evidence type="ECO:0000305" key="8">
    <source>
    </source>
</evidence>
<evidence type="ECO:0000312" key="9">
    <source>
        <dbReference type="EMBL" id="BAM25049.1"/>
    </source>
</evidence>
<sequence length="179" mass="20385">MHALRSSVLALWLCLHVSVRAWMTYRSANGLDEYEPEDRIIFVGTKWCGNGNVAEGPEDLGSLKETDACCREHDMCPDLIEAGQSKHGLTNTASYTRLNCACDEKFYNCLKNSSETGSGAVRFTYFTLLGTMCYRNEHPLICVKKGWFSCSKYELDQSQPKRYQWFDVSSNFAFPRMLT</sequence>
<keyword id="KW-0106">Calcium</keyword>
<keyword id="KW-0903">Direct protein sequencing</keyword>
<keyword id="KW-1015">Disulfide bond</keyword>
<keyword id="KW-0325">Glycoprotein</keyword>
<keyword id="KW-0378">Hydrolase</keyword>
<keyword id="KW-0442">Lipid degradation</keyword>
<keyword id="KW-0443">Lipid metabolism</keyword>
<keyword id="KW-0479">Metal-binding</keyword>
<keyword id="KW-0964">Secreted</keyword>
<keyword id="KW-0732">Signal</keyword>
<feature type="signal peptide" evidence="2">
    <location>
        <begin position="1"/>
        <end position="21"/>
    </location>
</feature>
<feature type="propeptide" id="PRO_0000441214" evidence="8">
    <location>
        <begin position="22"/>
        <end position="39"/>
    </location>
</feature>
<feature type="chain" id="PRO_0000441215" description="Phospholipase A2" evidence="8">
    <location>
        <begin position="40"/>
        <end position="179"/>
    </location>
</feature>
<feature type="active site" evidence="1">
    <location>
        <position position="73"/>
    </location>
</feature>
<feature type="active site" evidence="1">
    <location>
        <position position="103"/>
    </location>
</feature>
<feature type="binding site" evidence="1">
    <location>
        <position position="47"/>
    </location>
    <ligand>
        <name>Ca(2+)</name>
        <dbReference type="ChEBI" id="CHEBI:29108"/>
    </ligand>
</feature>
<feature type="binding site" evidence="1">
    <location>
        <position position="49"/>
    </location>
    <ligand>
        <name>Ca(2+)</name>
        <dbReference type="ChEBI" id="CHEBI:29108"/>
    </ligand>
</feature>
<feature type="binding site" evidence="1">
    <location>
        <position position="51"/>
    </location>
    <ligand>
        <name>Ca(2+)</name>
        <dbReference type="ChEBI" id="CHEBI:29108"/>
    </ligand>
</feature>
<feature type="binding site" evidence="1">
    <location>
        <position position="74"/>
    </location>
    <ligand>
        <name>Ca(2+)</name>
        <dbReference type="ChEBI" id="CHEBI:29108"/>
    </ligand>
</feature>
<feature type="glycosylation site" description="N-linked (GlcNAc...) asparagine" evidence="3">
    <location>
        <position position="112"/>
    </location>
</feature>
<feature type="disulfide bond" evidence="1">
    <location>
        <begin position="48"/>
        <end position="70"/>
    </location>
</feature>
<feature type="disulfide bond" evidence="1">
    <location>
        <begin position="69"/>
        <end position="109"/>
    </location>
</feature>
<feature type="disulfide bond" evidence="1">
    <location>
        <begin position="76"/>
        <end position="102"/>
    </location>
</feature>
<feature type="disulfide bond" evidence="1">
    <location>
        <begin position="100"/>
        <end position="133"/>
    </location>
</feature>
<feature type="disulfide bond" evidence="1">
    <location>
        <begin position="142"/>
        <end position="150"/>
    </location>
</feature>
<gene>
    <name evidence="9" type="primary">PLA2</name>
</gene>
<dbReference type="EC" id="3.1.1.4" evidence="4"/>
<dbReference type="EMBL" id="AB731659">
    <property type="protein sequence ID" value="BAM25049.1"/>
    <property type="molecule type" value="mRNA"/>
</dbReference>
<dbReference type="SMR" id="I7GQA7"/>
<dbReference type="GlyCosmos" id="I7GQA7">
    <property type="glycosylation" value="1 site, No reported glycans"/>
</dbReference>
<dbReference type="GO" id="GO:0005576">
    <property type="term" value="C:extracellular region"/>
    <property type="evidence" value="ECO:0000314"/>
    <property type="project" value="UniProtKB"/>
</dbReference>
<dbReference type="GO" id="GO:0046872">
    <property type="term" value="F:metal ion binding"/>
    <property type="evidence" value="ECO:0007669"/>
    <property type="project" value="UniProtKB-KW"/>
</dbReference>
<dbReference type="GO" id="GO:0004623">
    <property type="term" value="F:phospholipase A2 activity"/>
    <property type="evidence" value="ECO:0007669"/>
    <property type="project" value="UniProtKB-EC"/>
</dbReference>
<dbReference type="GO" id="GO:0050482">
    <property type="term" value="P:arachidonate secretion"/>
    <property type="evidence" value="ECO:0007669"/>
    <property type="project" value="InterPro"/>
</dbReference>
<dbReference type="GO" id="GO:0016042">
    <property type="term" value="P:lipid catabolic process"/>
    <property type="evidence" value="ECO:0007669"/>
    <property type="project" value="UniProtKB-KW"/>
</dbReference>
<dbReference type="GO" id="GO:0006644">
    <property type="term" value="P:phospholipid metabolic process"/>
    <property type="evidence" value="ECO:0007669"/>
    <property type="project" value="InterPro"/>
</dbReference>
<dbReference type="CDD" id="cd04704">
    <property type="entry name" value="PLA2_bee_venom_like"/>
    <property type="match status" value="1"/>
</dbReference>
<dbReference type="FunFam" id="1.20.90.10:FF:000002">
    <property type="entry name" value="Phospholipase A2 group III"/>
    <property type="match status" value="1"/>
</dbReference>
<dbReference type="Gene3D" id="1.20.90.10">
    <property type="entry name" value="Phospholipase A2 domain"/>
    <property type="match status" value="1"/>
</dbReference>
<dbReference type="InterPro" id="IPR016090">
    <property type="entry name" value="PLipase_A2_dom"/>
</dbReference>
<dbReference type="InterPro" id="IPR036444">
    <property type="entry name" value="PLipase_A2_dom_sf"/>
</dbReference>
<dbReference type="InterPro" id="IPR033113">
    <property type="entry name" value="PLipase_A2_His_AS"/>
</dbReference>
<dbReference type="PANTHER" id="PTHR12253">
    <property type="entry name" value="RH14732P"/>
    <property type="match status" value="1"/>
</dbReference>
<dbReference type="Pfam" id="PF05826">
    <property type="entry name" value="Phospholip_A2_2"/>
    <property type="match status" value="1"/>
</dbReference>
<dbReference type="SMART" id="SM00085">
    <property type="entry name" value="PA2c"/>
    <property type="match status" value="1"/>
</dbReference>
<dbReference type="SUPFAM" id="SSF48619">
    <property type="entry name" value="Phospholipase A2, PLA2"/>
    <property type="match status" value="1"/>
</dbReference>
<dbReference type="PROSITE" id="PS00118">
    <property type="entry name" value="PA2_HIS"/>
    <property type="match status" value="1"/>
</dbReference>